<protein>
    <recommendedName>
        <fullName evidence="22">Centrosome-associated zinc finger protein Cp190</fullName>
    </recommendedName>
    <alternativeName>
        <fullName evidence="23">Centrosomal protein 190kD</fullName>
    </alternativeName>
    <alternativeName>
        <fullName evidence="22">Microtubule associated protein 190kD</fullName>
    </alternativeName>
    <alternativeName>
        <fullName evidence="22">Protein enhancer of mod(mdg4)4-1</fullName>
    </alternativeName>
</protein>
<organism evidence="25">
    <name type="scientific">Drosophila melanogaster</name>
    <name type="common">Fruit fly</name>
    <dbReference type="NCBI Taxonomy" id="7227"/>
    <lineage>
        <taxon>Eukaryota</taxon>
        <taxon>Metazoa</taxon>
        <taxon>Ecdysozoa</taxon>
        <taxon>Arthropoda</taxon>
        <taxon>Hexapoda</taxon>
        <taxon>Insecta</taxon>
        <taxon>Pterygota</taxon>
        <taxon>Neoptera</taxon>
        <taxon>Endopterygota</taxon>
        <taxon>Diptera</taxon>
        <taxon>Brachycera</taxon>
        <taxon>Muscomorpha</taxon>
        <taxon>Ephydroidea</taxon>
        <taxon>Drosophilidae</taxon>
        <taxon>Drosophila</taxon>
        <taxon>Sophophora</taxon>
    </lineage>
</organism>
<reference key="1">
    <citation type="journal article" date="1995" name="J. Cell Sci.">
        <title>The 190 kDa centrosome-associated protein of Drosophila melanogaster contains four zinc finger motifs and binds to specific sites on polytene chromosomes.</title>
        <authorList>
            <person name="Whitfield W.G.F."/>
            <person name="Chaplin M.A."/>
            <person name="Oegema K."/>
            <person name="Parry H."/>
            <person name="Glover D.M."/>
        </authorList>
    </citation>
    <scope>NUCLEOTIDE SEQUENCE [MRNA]</scope>
    <scope>SUBCELLULAR LOCATION</scope>
    <scope>DEVELOPMENTAL STAGE</scope>
    <source>
        <strain>Oregon-R</strain>
    </source>
</reference>
<reference key="2">
    <citation type="journal article" date="2000" name="Science">
        <title>The genome sequence of Drosophila melanogaster.</title>
        <authorList>
            <person name="Adams M.D."/>
            <person name="Celniker S.E."/>
            <person name="Holt R.A."/>
            <person name="Evans C.A."/>
            <person name="Gocayne J.D."/>
            <person name="Amanatides P.G."/>
            <person name="Scherer S.E."/>
            <person name="Li P.W."/>
            <person name="Hoskins R.A."/>
            <person name="Galle R.F."/>
            <person name="George R.A."/>
            <person name="Lewis S.E."/>
            <person name="Richards S."/>
            <person name="Ashburner M."/>
            <person name="Henderson S.N."/>
            <person name="Sutton G.G."/>
            <person name="Wortman J.R."/>
            <person name="Yandell M.D."/>
            <person name="Zhang Q."/>
            <person name="Chen L.X."/>
            <person name="Brandon R.C."/>
            <person name="Rogers Y.-H.C."/>
            <person name="Blazej R.G."/>
            <person name="Champe M."/>
            <person name="Pfeiffer B.D."/>
            <person name="Wan K.H."/>
            <person name="Doyle C."/>
            <person name="Baxter E.G."/>
            <person name="Helt G."/>
            <person name="Nelson C.R."/>
            <person name="Miklos G.L.G."/>
            <person name="Abril J.F."/>
            <person name="Agbayani A."/>
            <person name="An H.-J."/>
            <person name="Andrews-Pfannkoch C."/>
            <person name="Baldwin D."/>
            <person name="Ballew R.M."/>
            <person name="Basu A."/>
            <person name="Baxendale J."/>
            <person name="Bayraktaroglu L."/>
            <person name="Beasley E.M."/>
            <person name="Beeson K.Y."/>
            <person name="Benos P.V."/>
            <person name="Berman B.P."/>
            <person name="Bhandari D."/>
            <person name="Bolshakov S."/>
            <person name="Borkova D."/>
            <person name="Botchan M.R."/>
            <person name="Bouck J."/>
            <person name="Brokstein P."/>
            <person name="Brottier P."/>
            <person name="Burtis K.C."/>
            <person name="Busam D.A."/>
            <person name="Butler H."/>
            <person name="Cadieu E."/>
            <person name="Center A."/>
            <person name="Chandra I."/>
            <person name="Cherry J.M."/>
            <person name="Cawley S."/>
            <person name="Dahlke C."/>
            <person name="Davenport L.B."/>
            <person name="Davies P."/>
            <person name="de Pablos B."/>
            <person name="Delcher A."/>
            <person name="Deng Z."/>
            <person name="Mays A.D."/>
            <person name="Dew I."/>
            <person name="Dietz S.M."/>
            <person name="Dodson K."/>
            <person name="Doup L.E."/>
            <person name="Downes M."/>
            <person name="Dugan-Rocha S."/>
            <person name="Dunkov B.C."/>
            <person name="Dunn P."/>
            <person name="Durbin K.J."/>
            <person name="Evangelista C.C."/>
            <person name="Ferraz C."/>
            <person name="Ferriera S."/>
            <person name="Fleischmann W."/>
            <person name="Fosler C."/>
            <person name="Gabrielian A.E."/>
            <person name="Garg N.S."/>
            <person name="Gelbart W.M."/>
            <person name="Glasser K."/>
            <person name="Glodek A."/>
            <person name="Gong F."/>
            <person name="Gorrell J.H."/>
            <person name="Gu Z."/>
            <person name="Guan P."/>
            <person name="Harris M."/>
            <person name="Harris N.L."/>
            <person name="Harvey D.A."/>
            <person name="Heiman T.J."/>
            <person name="Hernandez J.R."/>
            <person name="Houck J."/>
            <person name="Hostin D."/>
            <person name="Houston K.A."/>
            <person name="Howland T.J."/>
            <person name="Wei M.-H."/>
            <person name="Ibegwam C."/>
            <person name="Jalali M."/>
            <person name="Kalush F."/>
            <person name="Karpen G.H."/>
            <person name="Ke Z."/>
            <person name="Kennison J.A."/>
            <person name="Ketchum K.A."/>
            <person name="Kimmel B.E."/>
            <person name="Kodira C.D."/>
            <person name="Kraft C.L."/>
            <person name="Kravitz S."/>
            <person name="Kulp D."/>
            <person name="Lai Z."/>
            <person name="Lasko P."/>
            <person name="Lei Y."/>
            <person name="Levitsky A.A."/>
            <person name="Li J.H."/>
            <person name="Li Z."/>
            <person name="Liang Y."/>
            <person name="Lin X."/>
            <person name="Liu X."/>
            <person name="Mattei B."/>
            <person name="McIntosh T.C."/>
            <person name="McLeod M.P."/>
            <person name="McPherson D."/>
            <person name="Merkulov G."/>
            <person name="Milshina N.V."/>
            <person name="Mobarry C."/>
            <person name="Morris J."/>
            <person name="Moshrefi A."/>
            <person name="Mount S.M."/>
            <person name="Moy M."/>
            <person name="Murphy B."/>
            <person name="Murphy L."/>
            <person name="Muzny D.M."/>
            <person name="Nelson D.L."/>
            <person name="Nelson D.R."/>
            <person name="Nelson K.A."/>
            <person name="Nixon K."/>
            <person name="Nusskern D.R."/>
            <person name="Pacleb J.M."/>
            <person name="Palazzolo M."/>
            <person name="Pittman G.S."/>
            <person name="Pan S."/>
            <person name="Pollard J."/>
            <person name="Puri V."/>
            <person name="Reese M.G."/>
            <person name="Reinert K."/>
            <person name="Remington K."/>
            <person name="Saunders R.D.C."/>
            <person name="Scheeler F."/>
            <person name="Shen H."/>
            <person name="Shue B.C."/>
            <person name="Siden-Kiamos I."/>
            <person name="Simpson M."/>
            <person name="Skupski M.P."/>
            <person name="Smith T.J."/>
            <person name="Spier E."/>
            <person name="Spradling A.C."/>
            <person name="Stapleton M."/>
            <person name="Strong R."/>
            <person name="Sun E."/>
            <person name="Svirskas R."/>
            <person name="Tector C."/>
            <person name="Turner R."/>
            <person name="Venter E."/>
            <person name="Wang A.H."/>
            <person name="Wang X."/>
            <person name="Wang Z.-Y."/>
            <person name="Wassarman D.A."/>
            <person name="Weinstock G.M."/>
            <person name="Weissenbach J."/>
            <person name="Williams S.M."/>
            <person name="Woodage T."/>
            <person name="Worley K.C."/>
            <person name="Wu D."/>
            <person name="Yang S."/>
            <person name="Yao Q.A."/>
            <person name="Ye J."/>
            <person name="Yeh R.-F."/>
            <person name="Zaveri J.S."/>
            <person name="Zhan M."/>
            <person name="Zhang G."/>
            <person name="Zhao Q."/>
            <person name="Zheng L."/>
            <person name="Zheng X.H."/>
            <person name="Zhong F.N."/>
            <person name="Zhong W."/>
            <person name="Zhou X."/>
            <person name="Zhu S.C."/>
            <person name="Zhu X."/>
            <person name="Smith H.O."/>
            <person name="Gibbs R.A."/>
            <person name="Myers E.W."/>
            <person name="Rubin G.M."/>
            <person name="Venter J.C."/>
        </authorList>
    </citation>
    <scope>NUCLEOTIDE SEQUENCE [LARGE SCALE GENOMIC DNA]</scope>
    <source>
        <strain>Berkeley</strain>
    </source>
</reference>
<reference key="3">
    <citation type="journal article" date="2002" name="Genome Biol.">
        <title>Annotation of the Drosophila melanogaster euchromatic genome: a systematic review.</title>
        <authorList>
            <person name="Misra S."/>
            <person name="Crosby M.A."/>
            <person name="Mungall C.J."/>
            <person name="Matthews B.B."/>
            <person name="Campbell K.S."/>
            <person name="Hradecky P."/>
            <person name="Huang Y."/>
            <person name="Kaminker J.S."/>
            <person name="Millburn G.H."/>
            <person name="Prochnik S.E."/>
            <person name="Smith C.D."/>
            <person name="Tupy J.L."/>
            <person name="Whitfield E.J."/>
            <person name="Bayraktaroglu L."/>
            <person name="Berman B.P."/>
            <person name="Bettencourt B.R."/>
            <person name="Celniker S.E."/>
            <person name="de Grey A.D.N.J."/>
            <person name="Drysdale R.A."/>
            <person name="Harris N.L."/>
            <person name="Richter J."/>
            <person name="Russo S."/>
            <person name="Schroeder A.J."/>
            <person name="Shu S.Q."/>
            <person name="Stapleton M."/>
            <person name="Yamada C."/>
            <person name="Ashburner M."/>
            <person name="Gelbart W.M."/>
            <person name="Rubin G.M."/>
            <person name="Lewis S.E."/>
        </authorList>
    </citation>
    <scope>GENOME REANNOTATION</scope>
    <source>
        <strain>Berkeley</strain>
    </source>
</reference>
<reference key="4">
    <citation type="submission" date="2003-08" db="EMBL/GenBank/DDBJ databases">
        <authorList>
            <person name="Stapleton M."/>
            <person name="Brokstein P."/>
            <person name="Hong L."/>
            <person name="Agbayani A."/>
            <person name="Carlson J.W."/>
            <person name="Champe M."/>
            <person name="Chavez C."/>
            <person name="Dorsett V."/>
            <person name="Dresnek D."/>
            <person name="Farfan D."/>
            <person name="Frise E."/>
            <person name="George R.A."/>
            <person name="Gonzalez M."/>
            <person name="Guarin H."/>
            <person name="Kronmiller B."/>
            <person name="Li P.W."/>
            <person name="Liao G."/>
            <person name="Miranda A."/>
            <person name="Mungall C.J."/>
            <person name="Nunoo J."/>
            <person name="Pacleb J.M."/>
            <person name="Paragas V."/>
            <person name="Park S."/>
            <person name="Patel S."/>
            <person name="Phouanenavong S."/>
            <person name="Wan K.H."/>
            <person name="Yu C."/>
            <person name="Lewis S.E."/>
            <person name="Rubin G.M."/>
            <person name="Celniker S.E."/>
        </authorList>
    </citation>
    <scope>NUCLEOTIDE SEQUENCE [LARGE SCALE MRNA]</scope>
    <source>
        <strain>Berkeley</strain>
        <tissue>Embryo</tissue>
    </source>
</reference>
<reference key="5">
    <citation type="journal article" date="1992" name="Mol. Biol. Cell">
        <title>Purification of a multiprotein complex containing centrosomal proteins from the Drosophila embryo by chromatography with low-affinity polyclonal antibodies.</title>
        <authorList>
            <person name="Kellogg D.R."/>
            <person name="Alberts B.M."/>
        </authorList>
    </citation>
    <scope>INTERACTION WITH CP60</scope>
    <scope>SUBCELLULAR LOCATION</scope>
    <scope>DEVELOPMENTAL STAGE</scope>
</reference>
<reference key="6">
    <citation type="journal article" date="1993" name="J. Cell Biol.">
        <title>Drosophila gamma-tubulin is part of a complex containing two previously identified centrosomal MAPs.</title>
        <authorList>
            <person name="Raff J.W."/>
            <person name="Kellogg D.R."/>
            <person name="Alberts B.M."/>
        </authorList>
    </citation>
    <scope>INTERACTION WITH CP60 AND MICROTUBULES</scope>
    <scope>SUBCELLULAR LOCATION</scope>
    <scope>DEVELOPMENTAL STAGE</scope>
</reference>
<reference key="7">
    <citation type="journal article" date="1995" name="J. Cell Biol.">
        <title>The cell cycle-dependent localization of the CP190 centrosomal protein is determined by the coordinate action of two separable domains.</title>
        <authorList>
            <person name="Oegema K."/>
            <person name="Whitfield W.G.F."/>
            <person name="Alberts B.M."/>
        </authorList>
    </citation>
    <scope>INTERACTION WITH MICROTUBULES</scope>
    <scope>SUBCELLULAR LOCATION</scope>
</reference>
<reference key="8">
    <citation type="journal article" date="1995" name="Mol. Biol. Cell">
        <title>CP60: a microtubule-associated protein that is localized to the centrosome in a cell cycle-specific manner.</title>
        <authorList>
            <person name="Kellogg D.R."/>
            <person name="Oegema K."/>
            <person name="Raff J."/>
            <person name="Schneider K."/>
            <person name="Alberts B.M."/>
        </authorList>
    </citation>
    <scope>INTERACTION WITH CP60</scope>
    <scope>SUBCELLULAR LOCATION</scope>
    <scope>DEVELOPMENTAL STAGE</scope>
</reference>
<reference key="9">
    <citation type="journal article" date="1997" name="J. Cell Sci.">
        <title>Two proteins that cycle asynchronously between centrosomes and nuclear structures: Drosophila CP60 and CP190.</title>
        <authorList>
            <person name="Oegema K."/>
            <person name="Marshall W.F."/>
            <person name="Sedat J.W."/>
            <person name="Alberts B.M."/>
        </authorList>
    </citation>
    <scope>SUBCELLULAR LOCATION</scope>
</reference>
<reference key="10">
    <citation type="journal article" date="1997" name="Mech. Dev.">
        <title>Assembly of the zygotic centrosome in the fertilized Drosophila egg.</title>
        <authorList>
            <person name="Riparbelli M.G."/>
            <person name="Whitfield W.G.F."/>
            <person name="Dallai R."/>
            <person name="Callaini G."/>
        </authorList>
    </citation>
    <scope>TISSUE SPECIFICITY</scope>
</reference>
<reference key="11">
    <citation type="journal article" date="1998" name="J. Cell Biol.">
        <title>Recruitment of the gamma-tubulin ring complex to Drosophila salt-stripped centrosome scaffolds.</title>
        <authorList>
            <person name="Moritz M."/>
            <person name="Zheng Y."/>
            <person name="Alberts B.M."/>
            <person name="Oegema K."/>
        </authorList>
    </citation>
    <scope>INTERACTION WITH CP60</scope>
</reference>
<reference key="12">
    <citation type="journal article" date="2004" name="J. Cell Sci.">
        <title>The Drosophila centrosome-associated protein CP190 is essential for viability but not for cell division.</title>
        <authorList>
            <person name="Butcher R.D.J."/>
            <person name="Chodagam S."/>
            <person name="Basto R."/>
            <person name="Wakefield J.G."/>
            <person name="Henderson D.S."/>
            <person name="Raff J.W."/>
            <person name="Whitfield W.G.F."/>
        </authorList>
    </citation>
    <scope>FUNCTION</scope>
    <scope>INTERACTION WITH MICROTUBULES</scope>
    <scope>SUBCELLULAR LOCATION</scope>
</reference>
<reference key="13">
    <citation type="journal article" date="2004" name="J. Cell Sci.">
        <title>Elongation of centriolar microtubule triplets contributes to the formation of the mitotic spindle in gamma-tubulin-depleted cells.</title>
        <authorList>
            <person name="Raynaud-Messina B."/>
            <person name="Mazzolini L."/>
            <person name="Moisand A."/>
            <person name="Cirinesi A.-M."/>
            <person name="Wright M."/>
        </authorList>
    </citation>
    <scope>SUBCELLULAR LOCATION</scope>
</reference>
<reference key="14">
    <citation type="journal article" date="2004" name="Mol. Cell">
        <title>The centrosomal protein CP190 is a component of the gypsy chromatin insulator.</title>
        <authorList>
            <person name="Pai C.-Y."/>
            <person name="Lei E.P."/>
            <person name="Ghosh D."/>
            <person name="Corces V.G."/>
        </authorList>
    </citation>
    <scope>FUNCTION</scope>
    <scope>DNA-BINDING</scope>
    <scope>INTERACTION WITH MOD(MDG4) AND SU(HW)</scope>
    <scope>SUBCELLULAR LOCATION</scope>
</reference>
<reference key="15">
    <citation type="journal article" date="2005" name="Curr. Biol.">
        <title>The centrosomal protein CP190 regulates myosin function during early Drosophila development.</title>
        <authorList>
            <person name="Chodagam S."/>
            <person name="Royou A."/>
            <person name="Whitfield W.G.F."/>
            <person name="Karess R."/>
            <person name="Raff J.W."/>
        </authorList>
    </citation>
    <scope>FUNCTION</scope>
    <scope>SUBCELLULAR LOCATION</scope>
</reference>
<reference key="16">
    <citation type="journal article" date="2005" name="Mol. Cell">
        <title>The ubiquitin ligase dTopors directs the nuclear organization of a chromatin insulator.</title>
        <authorList>
            <person name="Capelson M."/>
            <person name="Corces V.G."/>
        </authorList>
    </citation>
    <scope>SUBCELLULAR LOCATION</scope>
</reference>
<reference key="17">
    <citation type="journal article" date="2007" name="Mol. Biosyst.">
        <title>An integrated chemical, mass spectrometric and computational strategy for (quantitative) phosphoproteomics: application to Drosophila melanogaster Kc167 cells.</title>
        <authorList>
            <person name="Bodenmiller B."/>
            <person name="Mueller L.N."/>
            <person name="Pedrioli P.G.A."/>
            <person name="Pflieger D."/>
            <person name="Juenger M.A."/>
            <person name="Eng J.K."/>
            <person name="Aebersold R."/>
            <person name="Tao W.A."/>
        </authorList>
    </citation>
    <scope>PHOSPHORYLATION [LARGE SCALE ANALYSIS] AT SER-211; SER-319; SER-920 AND SER-925</scope>
    <scope>IDENTIFICATION BY MASS SPECTROMETRY</scope>
</reference>
<reference key="18">
    <citation type="journal article" date="2008" name="J. Proteome Res.">
        <title>Phosphoproteome analysis of Drosophila melanogaster embryos.</title>
        <authorList>
            <person name="Zhai B."/>
            <person name="Villen J."/>
            <person name="Beausoleil S.A."/>
            <person name="Mintseris J."/>
            <person name="Gygi S.P."/>
        </authorList>
    </citation>
    <scope>PHOSPHORYLATION [LARGE SCALE ANALYSIS] AT SER-197; THR-229; SER-233; SER-298; THR-603; SER-610; SER-708; SER-723; THR-727; SER-745; SER-748; SER-757; SER-760; THR-817; SER-920; SER-927; THR-936; SER-938; SER-1071 AND SER-1074</scope>
    <scope>IDENTIFICATION BY MASS SPECTROMETRY</scope>
    <source>
        <tissue>Embryo</tissue>
    </source>
</reference>
<reference key="19">
    <citation type="journal article" date="2015" name="Genes Dev.">
        <title>Common and distinct DNA-binding and regulatory activities of the BEN-solo transcription factor family.</title>
        <authorList>
            <person name="Dai Q."/>
            <person name="Ren A."/>
            <person name="Westholm J.O."/>
            <person name="Duan H."/>
            <person name="Patel D.J."/>
            <person name="Lai E.C."/>
        </authorList>
    </citation>
    <scope>INTERACTION WITH INSV</scope>
</reference>
<reference key="20">
    <citation type="journal article" date="2015" name="Genome Res.">
        <title>Two new insulator proteins, Pita and ZIPIC, target CP190 to chromatin.</title>
        <authorList>
            <person name="Maksimenko O."/>
            <person name="Bartkuhn M."/>
            <person name="Stakhov V."/>
            <person name="Herold M."/>
            <person name="Zolotarev N."/>
            <person name="Jox T."/>
            <person name="Buxa M.K."/>
            <person name="Kirsch R."/>
            <person name="Bonchuk A."/>
            <person name="Fedotova A."/>
            <person name="Kyrchanova O."/>
            <person name="Renkawitz R."/>
            <person name="Georgiev P."/>
        </authorList>
    </citation>
    <scope>FUNCTION</scope>
    <scope>INTERACTION WITH PITA AND ZIPIC</scope>
    <scope>SUBCELLULAR LOCATION</scope>
    <scope>DEVELOPMENTAL STAGE</scope>
</reference>
<reference key="21">
    <citation type="journal article" date="2017" name="Mol. Cell">
        <title>Metazoan nuclear pores provide a scaffold for poised genes and mediate induced enhancer-promoter contacts.</title>
        <authorList>
            <person name="Pascual-Garcia P."/>
            <person name="Debo B."/>
            <person name="Aleman J.R."/>
            <person name="Talamas J.A."/>
            <person name="Lan Y."/>
            <person name="Nguyen N.H."/>
            <person name="Won K.J."/>
            <person name="Capelson M."/>
        </authorList>
    </citation>
    <scope>INTERACTION WITH NUP98</scope>
</reference>
<reference evidence="22" key="22">
    <citation type="journal article" date="2021" name="Epigenetics Chromatin">
        <title>Mechanism and functional role of the interaction between CP190 and the architectural protein Pita in Drosophila melanogaster.</title>
        <authorList>
            <person name="Sabirov M."/>
            <person name="Kyrchanova O."/>
            <person name="Pokholkova G.V."/>
            <person name="Bonchuk A."/>
            <person name="Klimenko N."/>
            <person name="Belova E."/>
            <person name="Zhimulev I.F."/>
            <person name="Maksimenko O."/>
            <person name="Georgiev P."/>
        </authorList>
    </citation>
    <scope>FUNCTION</scope>
    <scope>INTERACTION WITH PITA</scope>
</reference>
<reference key="23">
    <citation type="journal article" date="2024" name="Nucleic Acids Res.">
        <title>New Drosophila promoter-associated architectural protein Mzfp1 interacts with CP190 and is required for housekeeping gene expression and insulator activity.</title>
        <authorList>
            <person name="Sokolov V."/>
            <person name="Kyrchanova O."/>
            <person name="Klimenko N."/>
            <person name="Fedotova A."/>
            <person name="Ibragimov A."/>
            <person name="Maksimenko O."/>
            <person name="Georgiev P."/>
        </authorList>
    </citation>
    <scope>FUNCTION</scope>
    <scope>INTERACTION WITH CLIFF</scope>
    <scope>SUBCELLULAR LOCATION</scope>
</reference>
<reference evidence="24" key="24">
    <citation type="journal article" date="2015" name="PLoS ONE">
        <title>Newly Characterized Region of CP190 Associates with Microtubules and Mediates Proper Spindle Morphology in Drosophila Stem Cells.</title>
        <authorList>
            <person name="Plevock K.M."/>
            <person name="Galletta B.J."/>
            <person name="Slep K.C."/>
            <person name="Rusan N.M."/>
        </authorList>
    </citation>
    <scope>X-RAY CRYSTALLOGRAPHY (2.5 ANGSTROMS) OF 1-135</scope>
    <scope>FUNCTION</scope>
    <scope>HOMODIMER</scope>
    <scope>INTERACTION WITH MICROTUBULES</scope>
    <scope>SUBCELLULAR LOCATION</scope>
    <scope>MUTAGENESIS OF LEU-20</scope>
</reference>
<gene>
    <name evidence="23" type="primary">Cp190</name>
    <name evidence="23" type="synonym">DMAP190</name>
    <name evidence="23" type="synonym">E(mod)4-1</name>
    <name evidence="23" type="ORF">CG6384</name>
</gene>
<evidence type="ECO:0000255" key="1">
    <source>
        <dbReference type="PROSITE-ProRule" id="PRU00037"/>
    </source>
</evidence>
<evidence type="ECO:0000255" key="2">
    <source>
        <dbReference type="PROSITE-ProRule" id="PRU00042"/>
    </source>
</evidence>
<evidence type="ECO:0000256" key="3">
    <source>
        <dbReference type="SAM" id="MobiDB-lite"/>
    </source>
</evidence>
<evidence type="ECO:0000269" key="4">
    <source>
    </source>
</evidence>
<evidence type="ECO:0000269" key="5">
    <source>
    </source>
</evidence>
<evidence type="ECO:0000269" key="6">
    <source>
    </source>
</evidence>
<evidence type="ECO:0000269" key="7">
    <source>
    </source>
</evidence>
<evidence type="ECO:0000269" key="8">
    <source>
    </source>
</evidence>
<evidence type="ECO:0000269" key="9">
    <source>
    </source>
</evidence>
<evidence type="ECO:0000269" key="10">
    <source>
    </source>
</evidence>
<evidence type="ECO:0000269" key="11">
    <source>
    </source>
</evidence>
<evidence type="ECO:0000269" key="12">
    <source>
    </source>
</evidence>
<evidence type="ECO:0000269" key="13">
    <source>
    </source>
</evidence>
<evidence type="ECO:0000269" key="14">
    <source>
    </source>
</evidence>
<evidence type="ECO:0000269" key="15">
    <source>
    </source>
</evidence>
<evidence type="ECO:0000269" key="16">
    <source>
    </source>
</evidence>
<evidence type="ECO:0000269" key="17">
    <source>
    </source>
</evidence>
<evidence type="ECO:0000269" key="18">
    <source>
    </source>
</evidence>
<evidence type="ECO:0000269" key="19">
    <source>
    </source>
</evidence>
<evidence type="ECO:0000269" key="20">
    <source>
    </source>
</evidence>
<evidence type="ECO:0000269" key="21">
    <source>
    </source>
</evidence>
<evidence type="ECO:0000305" key="22"/>
<evidence type="ECO:0000312" key="23">
    <source>
        <dbReference type="FlyBase" id="FBgn0000283"/>
    </source>
</evidence>
<evidence type="ECO:0000312" key="24">
    <source>
        <dbReference type="PDB" id="5EUP"/>
    </source>
</evidence>
<evidence type="ECO:0000312" key="25">
    <source>
        <dbReference type="Proteomes" id="UP000000803"/>
    </source>
</evidence>
<evidence type="ECO:0007829" key="26">
    <source>
        <dbReference type="PDB" id="6ER1"/>
    </source>
</evidence>
<sequence length="1096" mass="121679">MGEVKSVKVDNWGVFFLQKLQNFFNKTDYCDLTLQFRDNSQLKVHRLVLSACTDYFNVLEQTCEIVDDALIMPNEFQADVVVPIVNFMYTGTLEFELKMYGKLLRTAKEMNMTVLLKLLEAHRRTMENVNRQQRPPSPKGIRRRTVGQPSSGLPQQRVLGPSPQSRNVATPIAQRANTQRGSTGNTMSRTSGGSNRSPYGDSSNVKQEPTSPFEQLRKGYNNNKRPAQTSLLSPPSKKPSLEEVKEFAEQQRMRKQIAAEYGDNDPEYDGGMLYDDVHAGDDDDDDMPPQPSTSKQQSPQGTQTQLEHGSTTIILKQDSPSQTPTIIVKDSSNAKLNHTKIIAEVLRQYPHIVKGHKNIKLKIMPNTPAAPTEKSAPATVKPPANQSSATTSPHKKLHVSFKADKSTPLITAQQKAASSQQKSGTSQTTGNQGTGANPPANTAAAQKRRIDSKTMHALIAQGAENTTGPWLCLRCGVNGRPISIPSYRGFRRHLINTHKETIDPALCEHCGWRSVNNRELHFHMYMEHQTKSLLYTFAECALCNQSYRTKGELEAHINEVHTDDNKQQCIYCNKVFEQELQLYRHMKSYHKEQALEDGIIDETDEEFLGSQDEEEEAEGDEEQEPEQTGKVRILSDISLPATSAITVQQAQQEQLQEEDVEQVQQEVKFVGADGNEVELTDEQRKEILSQLNQQQAGATAGGVVMVLSEPEAEHVKQETDEKSLAGTEEEYDDSQIYSELGAADSVESAKKNIADESKESIDNLEWAENLIAESEEQSNKEPKSDKPRDDISEKLKELTGDWTEDENDDDVDDKPATAELASELANKDPEPTVHEEEDDIDLALQSLHKGPEEATEEKASEESVTSADDAVDAVPNINSQPEKMDVDSEAADEKASKAEVQIKKEAELENDQEEFIKEDSPIPHSDSVAELREAVTASEGEDDVHLEADNIRKELLDELIAEAEKPDQEKDIVQSEENATTEALDRSVTDEDDLVPPTQVSTEQMEIDEPAAEKAAENNEDTRTADEKEAVEDKPNQTQDVTTAEKPTLESAKAGDEATSGEAASVDKVKSLISEWGDDDEDEDENGVSAAAKEEL</sequence>
<keyword id="KW-0002">3D-structure</keyword>
<keyword id="KW-0156">Chromatin regulator</keyword>
<keyword id="KW-0158">Chromosome</keyword>
<keyword id="KW-0963">Cytoplasm</keyword>
<keyword id="KW-0206">Cytoskeleton</keyword>
<keyword id="KW-0238">DNA-binding</keyword>
<keyword id="KW-0479">Metal-binding</keyword>
<keyword id="KW-0493">Microtubule</keyword>
<keyword id="KW-0539">Nucleus</keyword>
<keyword id="KW-0597">Phosphoprotein</keyword>
<keyword id="KW-1185">Reference proteome</keyword>
<keyword id="KW-0677">Repeat</keyword>
<keyword id="KW-0804">Transcription</keyword>
<keyword id="KW-0805">Transcription regulation</keyword>
<keyword id="KW-0862">Zinc</keyword>
<keyword id="KW-0863">Zinc-finger</keyword>
<name>CP190_DROME</name>
<comment type="function">
    <text evidence="5 6 7 10 12 14 15 22">Plays a central role in chromatin domain organization and boundary function through recruitment by a range of insulator DNA-binding proteins, including ZIPIC, pita, CTCF, su(Hw), cliff and others (PubMed:25342723, PubMed:33752739, PubMed:38769058). Together with pita and CTCF cooperatively binds to and regulates the activity of the Miscadastral pigmentation (MCP) insulator (PubMed:25342723). Cooperatively recruited to the front-ultraabdominal (Fub) boundary by pita, su(Hw) and cliff (PubMed:38769058). Recruitment of Cp190 together with Chro/chromator induces chromatin decondensation (PubMed:33752739). Component of the gypsy chromatin insulator complex which is required for the function of the gypsy chromatin insulator and other endogenous chromatin insulators (PubMed:15574329). Chromatin insulators are regulatory elements that establish independent domains of transcriptional activity within eukaryotic genomes (Probable). Insulators have two defining properties; they can block the communication between an enhancer and a promoter when placed between them and can also buffer transgenes from position effect variegation (PEV) (Probable). Insulators are proposed to structure the chromatin fiber into independent domains of differing transcriptional potential by promoting the formation of distinct chromatin loops to form topologically associating domains (TADs) (Probable). This chromatin looping may involve the formation of insulator bodies, where homotypic interactions between individual subunits of the insulator complex could promote the clustering of widely spaced insulators at the nuclear periphery (Probable). Within the gypsy insulator complex, this protein may directly bind to insulator DNA at sites distinct from those recognized by su(Hw) (PubMed:15574329). Required during embryogenesis for axial expansion, an actin/myosin dependent process that distributes the dividing nuclei along the anterior-posterior axis of the syncytial embryo (PubMed:16051175). Associates with centrosomes and interphase microtubules during mitosis, and recruits CP60; may have a role in maintaining centrosome and spindle integrity (PubMed:14996941, PubMed:16051175, PubMed:26649574).</text>
</comment>
<comment type="subunit">
    <text evidence="4 5 6 10 11 12 13 14 15 16 17 19 21">Homodimerizes via the N-terminal BTB domain (PubMed:26649574). Component of the gypsy chromatin insulator complex, composed of Cp190, mod(mdg4) and su(Hw) (PubMed:15574329). The gypsy chromatin insulator complex interacts with Topors via mod(mdg4) and su(Hw) (PubMed:15574329). Interacts with Cp60 (PubMed:8491775, PubMed:8590797, PubMed:9700165). Interacts with inv (PubMed:25561495). Interacts with Nup98 (PubMed:28366641). Interacts (via BTB domain) with pita (via region between the ZAD domain and the first zinc finger domain); the interaction is direct (PubMed:25342723, PubMed:33752739). Interacts with ZIPIC (via region between the ZAD domain and the first zinc finger domain); the interaction is direct (PubMed:25342723). Interacts (via regions between the BTB domain and first zinc finger domain) with cliff (via regions flanking MADF domain 1); the interaction is probably direct (PubMed:38769058). Associates (via N-terminus) with microtubules; the interaction is direct, is enhanced by dimerization and involves multiple regions within the N-terminus (PubMed:14996941, PubMed:26649574, PubMed:8491775, PubMed:8522588). Microtubule association is enriched at growing plus ends (PubMed:26649574).</text>
</comment>
<comment type="interaction">
    <interactant intactId="EBI-868840">
        <id>Q24478</id>
    </interactant>
    <interactant intactId="EBI-192200">
        <id>Q8T051</id>
        <label>CG4639</label>
    </interactant>
    <organismsDiffer>false</organismsDiffer>
    <experiments>7</experiments>
</comment>
<comment type="interaction">
    <interactant intactId="EBI-868840">
        <id>Q24478</id>
    </interactant>
    <interactant intactId="EBI-104625">
        <id>Q1LZ24</id>
        <label>cliff</label>
    </interactant>
    <organismsDiffer>false</organismsDiffer>
    <experiments>5</experiments>
</comment>
<comment type="interaction">
    <interactant intactId="EBI-868840">
        <id>Q24478</id>
    </interactant>
    <interactant intactId="EBI-868840">
        <id>Q24478</id>
        <label>Cp190</label>
    </interactant>
    <organismsDiffer>false</organismsDiffer>
    <experiments>3</experiments>
</comment>
<comment type="interaction">
    <interactant intactId="EBI-868840">
        <id>Q24478</id>
    </interactant>
    <interactant intactId="EBI-466743">
        <id>Q8TA44</id>
        <label>CTCF</label>
    </interactant>
    <organismsDiffer>false</organismsDiffer>
    <experiments>5</experiments>
</comment>
<comment type="interaction">
    <interactant intactId="EBI-868840">
        <id>Q24478</id>
    </interactant>
    <interactant intactId="EBI-149931">
        <id>Q9VS55</id>
        <label>CTCF</label>
    </interactant>
    <organismsDiffer>false</organismsDiffer>
    <experiments>6</experiments>
</comment>
<comment type="interaction">
    <interactant intactId="EBI-868840">
        <id>Q24478</id>
    </interactant>
    <interactant intactId="EBI-127047">
        <id>Q9VBN9</id>
        <label>Dmel\CG4730</label>
    </interactant>
    <organismsDiffer>false</organismsDiffer>
    <experiments>10</experiments>
</comment>
<comment type="interaction">
    <interactant intactId="EBI-868840">
        <id>Q24478</id>
    </interactant>
    <interactant intactId="EBI-141691">
        <id>Q9VHG5</id>
        <label>Ibf1</label>
    </interactant>
    <organismsDiffer>false</organismsDiffer>
    <experiments>3</experiments>
</comment>
<comment type="interaction">
    <interactant intactId="EBI-868840">
        <id>Q24478</id>
    </interactant>
    <interactant intactId="EBI-157022">
        <id>Q9VHG6</id>
        <label>Ibf2</label>
    </interactant>
    <organismsDiffer>false</organismsDiffer>
    <experiments>3</experiments>
</comment>
<comment type="interaction">
    <interactant intactId="EBI-868840">
        <id>Q24478</id>
    </interactant>
    <interactant intactId="EBI-1433422">
        <id>Q86B87-1</id>
        <label>mod(mdg4)</label>
    </interactant>
    <organismsDiffer>false</organismsDiffer>
    <experiments>4</experiments>
</comment>
<comment type="interaction">
    <interactant intactId="EBI-868840">
        <id>Q24478</id>
    </interactant>
    <interactant intactId="EBI-114363">
        <id>Q95RQ8</id>
        <label>pita</label>
    </interactant>
    <organismsDiffer>false</organismsDiffer>
    <experiments>8</experiments>
</comment>
<comment type="interaction">
    <interactant intactId="EBI-868840">
        <id>Q24478</id>
    </interactant>
    <interactant intactId="EBI-101373">
        <id>P08970</id>
        <label>su(Hw)</label>
    </interactant>
    <organismsDiffer>false</organismsDiffer>
    <experiments>12</experiments>
</comment>
<comment type="subcellular location">
    <subcellularLocation>
        <location evidence="5 10 12">Nucleus</location>
    </subcellularLocation>
    <subcellularLocation>
        <location evidence="5 12 16 17 19">Cytoplasm</location>
        <location evidence="5 12 16 17 19">Cytoskeleton</location>
    </subcellularLocation>
    <subcellularLocation>
        <location evidence="5 12">Cytoplasm</location>
        <location evidence="5 12">Cytoskeleton</location>
        <location evidence="5 12">Microtubule organizing center</location>
        <location evidence="5 12">Centrosome</location>
    </subcellularLocation>
    <subcellularLocation>
        <location evidence="10 12 15">Chromosome</location>
    </subcellularLocation>
    <subcellularLocation>
        <location evidence="15">Nucleus</location>
        <location evidence="15">Nucleoplasm</location>
    </subcellularLocation>
    <text evidence="10 12 15">Localizes to nucleus during interphase and to the centrosome during mitosis (PubMed:25342723, PubMed:26649574). Colocalizes with other elements of the gypsy chromatin insulator complex at multiple sites on polytene chromosomes and at nuclear insulator bodies (PubMed:25342723). On polytene chromosomes of third-instar larvae colocalizes with pita and ZIPIC (PubMed:25342723). Predominantly present in the nucleoplasm (PubMed:38769058). Localizes to spindle microtubules during mitosis (PubMed:26649574).</text>
</comment>
<comment type="tissue specificity">
    <text evidence="20">Expressed in spermatids but not in mature spermatozoa. Localizes within the spermatids to a sheath of microtubules around the nucleus and to microtubules within the tail.</text>
</comment>
<comment type="developmental stage">
    <text evidence="4 10 16 18 19">Expressed in 0-12 hour old embryos and 3rd instar larvae (at protein level) (PubMed:25342723). Localizes to the centrosome throughout the nuclear division cycle in early syncytial embryos. Localization to the interphase nucleus is seen from nuclear cycle 9 onwards.</text>
</comment>
<dbReference type="EMBL" id="Z50021">
    <property type="protein sequence ID" value="CAA90324.1"/>
    <property type="molecule type" value="mRNA"/>
</dbReference>
<dbReference type="EMBL" id="AE014297">
    <property type="protein sequence ID" value="AAF55159.1"/>
    <property type="molecule type" value="Genomic_DNA"/>
</dbReference>
<dbReference type="EMBL" id="AE014297">
    <property type="protein sequence ID" value="AAN13643.1"/>
    <property type="molecule type" value="Genomic_DNA"/>
</dbReference>
<dbReference type="EMBL" id="BT010090">
    <property type="protein sequence ID" value="AAQ22559.1"/>
    <property type="molecule type" value="mRNA"/>
</dbReference>
<dbReference type="PIR" id="T13802">
    <property type="entry name" value="T13802"/>
</dbReference>
<dbReference type="RefSeq" id="NP_524359.2">
    <property type="nucleotide sequence ID" value="NM_079635.3"/>
</dbReference>
<dbReference type="RefSeq" id="NP_731998.1">
    <property type="nucleotide sequence ID" value="NM_169632.2"/>
</dbReference>
<dbReference type="PDB" id="4U77">
    <property type="method" value="X-ray"/>
    <property type="resolution" value="2.03 A"/>
    <property type="chains" value="A=1-134"/>
</dbReference>
<dbReference type="PDB" id="5EUP">
    <property type="method" value="X-ray"/>
    <property type="resolution" value="2.50 A"/>
    <property type="chains" value="A=1-135"/>
</dbReference>
<dbReference type="PDB" id="6ER1">
    <property type="method" value="X-ray"/>
    <property type="resolution" value="1.40 A"/>
    <property type="chains" value="A=1-126"/>
</dbReference>
<dbReference type="PDBsum" id="4U77"/>
<dbReference type="PDBsum" id="5EUP"/>
<dbReference type="PDBsum" id="6ER1"/>
<dbReference type="SMR" id="Q24478"/>
<dbReference type="BioGRID" id="66912">
    <property type="interactions" value="75"/>
</dbReference>
<dbReference type="FunCoup" id="Q24478">
    <property type="interactions" value="255"/>
</dbReference>
<dbReference type="IntAct" id="Q24478">
    <property type="interactions" value="22"/>
</dbReference>
<dbReference type="MINT" id="Q24478"/>
<dbReference type="STRING" id="7227.FBpp0082581"/>
<dbReference type="iPTMnet" id="Q24478"/>
<dbReference type="PaxDb" id="7227-FBpp0082580"/>
<dbReference type="DNASU" id="41848"/>
<dbReference type="EnsemblMetazoa" id="FBtr0083126">
    <property type="protein sequence ID" value="FBpp0082580"/>
    <property type="gene ID" value="FBgn0000283"/>
</dbReference>
<dbReference type="EnsemblMetazoa" id="FBtr0083127">
    <property type="protein sequence ID" value="FBpp0082581"/>
    <property type="gene ID" value="FBgn0000283"/>
</dbReference>
<dbReference type="GeneID" id="41848"/>
<dbReference type="KEGG" id="dme:Dmel_CG6384"/>
<dbReference type="AGR" id="FB:FBgn0000283"/>
<dbReference type="CTD" id="41848"/>
<dbReference type="FlyBase" id="FBgn0000283">
    <property type="gene designation" value="Cp190"/>
</dbReference>
<dbReference type="VEuPathDB" id="VectorBase:FBgn0000283"/>
<dbReference type="eggNOG" id="KOG1181">
    <property type="taxonomic scope" value="Eukaryota"/>
</dbReference>
<dbReference type="GeneTree" id="ENSGT00940000170886"/>
<dbReference type="HOGENOM" id="CLU_282038_0_0_1"/>
<dbReference type="InParanoid" id="Q24478"/>
<dbReference type="OMA" id="GMIVYIH"/>
<dbReference type="OrthoDB" id="10069414at2759"/>
<dbReference type="PhylomeDB" id="Q24478"/>
<dbReference type="SignaLink" id="Q24478"/>
<dbReference type="BioGRID-ORCS" id="41848">
    <property type="hits" value="0 hits in 1 CRISPR screen"/>
</dbReference>
<dbReference type="EvolutionaryTrace" id="Q24478"/>
<dbReference type="GenomeRNAi" id="41848"/>
<dbReference type="PRO" id="PR:Q24478"/>
<dbReference type="Proteomes" id="UP000000803">
    <property type="component" value="Chromosome 3R"/>
</dbReference>
<dbReference type="Bgee" id="FBgn0000283">
    <property type="expression patterns" value="Expressed in egg cell and 207 other cell types or tissues"/>
</dbReference>
<dbReference type="GO" id="GO:0005813">
    <property type="term" value="C:centrosome"/>
    <property type="evidence" value="ECO:0000314"/>
    <property type="project" value="UniProtKB"/>
</dbReference>
<dbReference type="GO" id="GO:0000785">
    <property type="term" value="C:chromatin"/>
    <property type="evidence" value="ECO:0000314"/>
    <property type="project" value="UniProtKB"/>
</dbReference>
<dbReference type="GO" id="GO:0000793">
    <property type="term" value="C:condensed chromosome"/>
    <property type="evidence" value="ECO:0000314"/>
    <property type="project" value="FlyBase"/>
</dbReference>
<dbReference type="GO" id="GO:0005737">
    <property type="term" value="C:cytoplasm"/>
    <property type="evidence" value="ECO:0007669"/>
    <property type="project" value="UniProtKB-KW"/>
</dbReference>
<dbReference type="GO" id="GO:0005654">
    <property type="term" value="C:nucleoplasm"/>
    <property type="evidence" value="ECO:0000314"/>
    <property type="project" value="UniProtKB"/>
</dbReference>
<dbReference type="GO" id="GO:0005634">
    <property type="term" value="C:nucleus"/>
    <property type="evidence" value="ECO:0000314"/>
    <property type="project" value="UniProtKB"/>
</dbReference>
<dbReference type="GO" id="GO:0000242">
    <property type="term" value="C:pericentriolar material"/>
    <property type="evidence" value="ECO:0000314"/>
    <property type="project" value="FlyBase"/>
</dbReference>
<dbReference type="GO" id="GO:0005700">
    <property type="term" value="C:polytene chromosome"/>
    <property type="evidence" value="ECO:0000314"/>
    <property type="project" value="UniProtKB"/>
</dbReference>
<dbReference type="GO" id="GO:0005704">
    <property type="term" value="C:polytene chromosome band"/>
    <property type="evidence" value="ECO:0000314"/>
    <property type="project" value="FlyBase"/>
</dbReference>
<dbReference type="GO" id="GO:0005876">
    <property type="term" value="C:spindle microtubule"/>
    <property type="evidence" value="ECO:0000314"/>
    <property type="project" value="FlyBase"/>
</dbReference>
<dbReference type="GO" id="GO:0003682">
    <property type="term" value="F:chromatin binding"/>
    <property type="evidence" value="ECO:0000314"/>
    <property type="project" value="UniProtKB"/>
</dbReference>
<dbReference type="GO" id="GO:0043035">
    <property type="term" value="F:chromatin insulator sequence binding"/>
    <property type="evidence" value="ECO:0000314"/>
    <property type="project" value="UniProtKB"/>
</dbReference>
<dbReference type="GO" id="GO:0003677">
    <property type="term" value="F:DNA binding"/>
    <property type="evidence" value="ECO:0000314"/>
    <property type="project" value="UniProtKB"/>
</dbReference>
<dbReference type="GO" id="GO:0000981">
    <property type="term" value="F:DNA-binding transcription factor activity, RNA polymerase II-specific"/>
    <property type="evidence" value="ECO:0000318"/>
    <property type="project" value="GO_Central"/>
</dbReference>
<dbReference type="GO" id="GO:0042802">
    <property type="term" value="F:identical protein binding"/>
    <property type="evidence" value="ECO:0000353"/>
    <property type="project" value="IntAct"/>
</dbReference>
<dbReference type="GO" id="GO:0008017">
    <property type="term" value="F:microtubule binding"/>
    <property type="evidence" value="ECO:0000314"/>
    <property type="project" value="UniProtKB"/>
</dbReference>
<dbReference type="GO" id="GO:0031208">
    <property type="term" value="F:POZ domain binding"/>
    <property type="evidence" value="ECO:0000314"/>
    <property type="project" value="FlyBase"/>
</dbReference>
<dbReference type="GO" id="GO:0042803">
    <property type="term" value="F:protein homodimerization activity"/>
    <property type="evidence" value="ECO:0000314"/>
    <property type="project" value="FlyBase"/>
</dbReference>
<dbReference type="GO" id="GO:0008270">
    <property type="term" value="F:zinc ion binding"/>
    <property type="evidence" value="ECO:0007669"/>
    <property type="project" value="UniProtKB-KW"/>
</dbReference>
<dbReference type="GO" id="GO:0140588">
    <property type="term" value="P:chromatin looping"/>
    <property type="evidence" value="ECO:0000315"/>
    <property type="project" value="FlyBase"/>
</dbReference>
<dbReference type="GO" id="GO:0033696">
    <property type="term" value="P:heterochromatin boundary formation"/>
    <property type="evidence" value="ECO:0000316"/>
    <property type="project" value="FlyBase"/>
</dbReference>
<dbReference type="GO" id="GO:0035191">
    <property type="term" value="P:nuclear axial expansion"/>
    <property type="evidence" value="ECO:0000315"/>
    <property type="project" value="FlyBase"/>
</dbReference>
<dbReference type="GO" id="GO:0051493">
    <property type="term" value="P:regulation of cytoskeleton organization"/>
    <property type="evidence" value="ECO:0000315"/>
    <property type="project" value="UniProtKB"/>
</dbReference>
<dbReference type="GO" id="GO:0006355">
    <property type="term" value="P:regulation of DNA-templated transcription"/>
    <property type="evidence" value="ECO:0000315"/>
    <property type="project" value="FlyBase"/>
</dbReference>
<dbReference type="GO" id="GO:0006357">
    <property type="term" value="P:regulation of transcription by RNA polymerase II"/>
    <property type="evidence" value="ECO:0000318"/>
    <property type="project" value="GO_Central"/>
</dbReference>
<dbReference type="CDD" id="cd18311">
    <property type="entry name" value="BTB_POZ_CP190-like"/>
    <property type="match status" value="1"/>
</dbReference>
<dbReference type="Gene3D" id="3.30.160.60">
    <property type="entry name" value="Classic Zinc Finger"/>
    <property type="match status" value="1"/>
</dbReference>
<dbReference type="Gene3D" id="3.30.710.10">
    <property type="entry name" value="Potassium Channel Kv1.1, Chain A"/>
    <property type="match status" value="1"/>
</dbReference>
<dbReference type="InterPro" id="IPR000210">
    <property type="entry name" value="BTB/POZ_dom"/>
</dbReference>
<dbReference type="InterPro" id="IPR011333">
    <property type="entry name" value="SKP1/BTB/POZ_sf"/>
</dbReference>
<dbReference type="InterPro" id="IPR036236">
    <property type="entry name" value="Znf_C2H2_sf"/>
</dbReference>
<dbReference type="InterPro" id="IPR013087">
    <property type="entry name" value="Znf_C2H2_type"/>
</dbReference>
<dbReference type="PANTHER" id="PTHR24394:SF38">
    <property type="entry name" value="CENTROSOME-ASSOCIATED ZINC FINGER PROTEIN CP190"/>
    <property type="match status" value="1"/>
</dbReference>
<dbReference type="PANTHER" id="PTHR24394">
    <property type="entry name" value="ZINC FINGER PROTEIN"/>
    <property type="match status" value="1"/>
</dbReference>
<dbReference type="Pfam" id="PF00651">
    <property type="entry name" value="BTB"/>
    <property type="match status" value="1"/>
</dbReference>
<dbReference type="SMART" id="SM00225">
    <property type="entry name" value="BTB"/>
    <property type="match status" value="1"/>
</dbReference>
<dbReference type="SMART" id="SM00355">
    <property type="entry name" value="ZnF_C2H2"/>
    <property type="match status" value="4"/>
</dbReference>
<dbReference type="SUPFAM" id="SSF57667">
    <property type="entry name" value="beta-beta-alpha zinc fingers"/>
    <property type="match status" value="1"/>
</dbReference>
<dbReference type="SUPFAM" id="SSF54695">
    <property type="entry name" value="POZ domain"/>
    <property type="match status" value="1"/>
</dbReference>
<dbReference type="PROSITE" id="PS50097">
    <property type="entry name" value="BTB"/>
    <property type="match status" value="1"/>
</dbReference>
<dbReference type="PROSITE" id="PS00028">
    <property type="entry name" value="ZINC_FINGER_C2H2_1"/>
    <property type="match status" value="2"/>
</dbReference>
<dbReference type="PROSITE" id="PS50157">
    <property type="entry name" value="ZINC_FINGER_C2H2_2"/>
    <property type="match status" value="2"/>
</dbReference>
<proteinExistence type="evidence at protein level"/>
<accession>Q24478</accession>
<accession>A4V2Y3</accession>
<accession>Q9VFA1</accession>
<feature type="chain" id="PRO_0000232629" description="Centrosome-associated zinc finger protein Cp190">
    <location>
        <begin position="1"/>
        <end position="1096"/>
    </location>
</feature>
<feature type="domain" description="BTB" evidence="1">
    <location>
        <begin position="30"/>
        <end position="97"/>
    </location>
</feature>
<feature type="zinc finger region" description="C2H2-type 1" evidence="2">
    <location>
        <begin position="538"/>
        <end position="561"/>
    </location>
</feature>
<feature type="zinc finger region" description="C2H2-type 2" evidence="2">
    <location>
        <begin position="567"/>
        <end position="590"/>
    </location>
</feature>
<feature type="region of interest" description="Involved in microtubule and centrosome binding" evidence="12">
    <location>
        <begin position="1"/>
        <end position="209"/>
    </location>
</feature>
<feature type="region of interest" description="Disordered" evidence="3">
    <location>
        <begin position="126"/>
        <end position="308"/>
    </location>
</feature>
<feature type="region of interest" description="Nuclear localization" evidence="17">
    <location>
        <begin position="207"/>
        <end position="271"/>
    </location>
</feature>
<feature type="region of interest" description="Involved in interaction with cliff" evidence="15">
    <location>
        <begin position="210"/>
        <end position="245"/>
    </location>
</feature>
<feature type="region of interest" description="Centrosomal targeting M domain involved in interaction with ZIPIC" evidence="10">
    <location>
        <begin position="245"/>
        <end position="468"/>
    </location>
</feature>
<feature type="region of interest" description="Involved in interaction with cliff" evidence="15">
    <location>
        <begin position="309"/>
        <end position="390"/>
    </location>
</feature>
<feature type="region of interest" description="Disordered" evidence="3">
    <location>
        <begin position="366"/>
        <end position="449"/>
    </location>
</feature>
<feature type="region of interest" description="Centrosomal localization and interaction with microtubules" evidence="12 17">
    <location>
        <begin position="385"/>
        <end position="508"/>
    </location>
</feature>
<feature type="region of interest" description="Disordered" evidence="3">
    <location>
        <begin position="608"/>
        <end position="630"/>
    </location>
</feature>
<feature type="region of interest" description="Disordered" evidence="3">
    <location>
        <begin position="710"/>
        <end position="733"/>
    </location>
</feature>
<feature type="region of interest" description="Disordered" evidence="3">
    <location>
        <begin position="770"/>
        <end position="927"/>
    </location>
</feature>
<feature type="region of interest" description="Disordered" evidence="3">
    <location>
        <begin position="960"/>
        <end position="1096"/>
    </location>
</feature>
<feature type="compositionally biased region" description="Polar residues" evidence="3">
    <location>
        <begin position="175"/>
        <end position="213"/>
    </location>
</feature>
<feature type="compositionally biased region" description="Polar residues" evidence="3">
    <location>
        <begin position="220"/>
        <end position="230"/>
    </location>
</feature>
<feature type="compositionally biased region" description="Basic and acidic residues" evidence="3">
    <location>
        <begin position="239"/>
        <end position="252"/>
    </location>
</feature>
<feature type="compositionally biased region" description="Low complexity" evidence="3">
    <location>
        <begin position="292"/>
        <end position="305"/>
    </location>
</feature>
<feature type="compositionally biased region" description="Low complexity" evidence="3">
    <location>
        <begin position="412"/>
        <end position="445"/>
    </location>
</feature>
<feature type="compositionally biased region" description="Acidic residues" evidence="3">
    <location>
        <begin position="608"/>
        <end position="625"/>
    </location>
</feature>
<feature type="compositionally biased region" description="Basic and acidic residues" evidence="3">
    <location>
        <begin position="711"/>
        <end position="723"/>
    </location>
</feature>
<feature type="compositionally biased region" description="Basic and acidic residues" evidence="3">
    <location>
        <begin position="777"/>
        <end position="799"/>
    </location>
</feature>
<feature type="compositionally biased region" description="Acidic residues" evidence="3">
    <location>
        <begin position="802"/>
        <end position="812"/>
    </location>
</feature>
<feature type="compositionally biased region" description="Basic and acidic residues" evidence="3">
    <location>
        <begin position="825"/>
        <end position="834"/>
    </location>
</feature>
<feature type="compositionally biased region" description="Basic and acidic residues" evidence="3">
    <location>
        <begin position="849"/>
        <end position="861"/>
    </location>
</feature>
<feature type="compositionally biased region" description="Basic and acidic residues" evidence="3">
    <location>
        <begin position="882"/>
        <end position="907"/>
    </location>
</feature>
<feature type="compositionally biased region" description="Basic and acidic residues" evidence="3">
    <location>
        <begin position="914"/>
        <end position="927"/>
    </location>
</feature>
<feature type="compositionally biased region" description="Basic and acidic residues" evidence="3">
    <location>
        <begin position="960"/>
        <end position="973"/>
    </location>
</feature>
<feature type="compositionally biased region" description="Basic and acidic residues" evidence="3">
    <location>
        <begin position="1011"/>
        <end position="1035"/>
    </location>
</feature>
<feature type="compositionally biased region" description="Acidic residues" evidence="3">
    <location>
        <begin position="1076"/>
        <end position="1086"/>
    </location>
</feature>
<feature type="modified residue" description="Phosphoserine" evidence="9">
    <location>
        <position position="197"/>
    </location>
</feature>
<feature type="modified residue" description="Phosphoserine" evidence="8">
    <location>
        <position position="211"/>
    </location>
</feature>
<feature type="modified residue" description="Phosphothreonine" evidence="9">
    <location>
        <position position="229"/>
    </location>
</feature>
<feature type="modified residue" description="Phosphoserine" evidence="9">
    <location>
        <position position="233"/>
    </location>
</feature>
<feature type="modified residue" description="Phosphoserine" evidence="9">
    <location>
        <position position="298"/>
    </location>
</feature>
<feature type="modified residue" description="Phosphoserine" evidence="8">
    <location>
        <position position="319"/>
    </location>
</feature>
<feature type="modified residue" description="Phosphothreonine" evidence="9">
    <location>
        <position position="603"/>
    </location>
</feature>
<feature type="modified residue" description="Phosphoserine" evidence="9">
    <location>
        <position position="610"/>
    </location>
</feature>
<feature type="modified residue" description="Phosphoserine" evidence="9">
    <location>
        <position position="708"/>
    </location>
</feature>
<feature type="modified residue" description="Phosphoserine" evidence="9">
    <location>
        <position position="723"/>
    </location>
</feature>
<feature type="modified residue" description="Phosphothreonine" evidence="9">
    <location>
        <position position="727"/>
    </location>
</feature>
<feature type="modified residue" description="Phosphoserine" evidence="9">
    <location>
        <position position="745"/>
    </location>
</feature>
<feature type="modified residue" description="Phosphoserine" evidence="9">
    <location>
        <position position="748"/>
    </location>
</feature>
<feature type="modified residue" description="Phosphoserine" evidence="9">
    <location>
        <position position="757"/>
    </location>
</feature>
<feature type="modified residue" description="Phosphoserine" evidence="9">
    <location>
        <position position="760"/>
    </location>
</feature>
<feature type="modified residue" description="Phosphothreonine" evidence="9">
    <location>
        <position position="817"/>
    </location>
</feature>
<feature type="modified residue" description="Phosphoserine" evidence="8 9">
    <location>
        <position position="920"/>
    </location>
</feature>
<feature type="modified residue" description="Phosphoserine" evidence="8">
    <location>
        <position position="925"/>
    </location>
</feature>
<feature type="modified residue" description="Phosphoserine" evidence="9">
    <location>
        <position position="927"/>
    </location>
</feature>
<feature type="modified residue" description="Phosphothreonine" evidence="9">
    <location>
        <position position="936"/>
    </location>
</feature>
<feature type="modified residue" description="Phosphoserine" evidence="9">
    <location>
        <position position="938"/>
    </location>
</feature>
<feature type="modified residue" description="Phosphoserine" evidence="9">
    <location>
        <position position="1071"/>
    </location>
</feature>
<feature type="modified residue" description="Phosphoserine" evidence="9">
    <location>
        <position position="1074"/>
    </location>
</feature>
<feature type="mutagenesis site" description="Reduces microtubule association and protein solubility, possibly by disrupting the dimerization interface." evidence="12">
    <original>L</original>
    <variation>E</variation>
    <location>
        <position position="20"/>
    </location>
</feature>
<feature type="sequence conflict" description="In Ref. 1; CAA90324." evidence="22" ref="1">
    <original>G</original>
    <variation>D</variation>
    <location>
        <position position="1061"/>
    </location>
</feature>
<feature type="helix" evidence="26">
    <location>
        <begin position="12"/>
        <end position="26"/>
    </location>
</feature>
<feature type="strand" evidence="26">
    <location>
        <begin position="32"/>
        <end position="35"/>
    </location>
</feature>
<feature type="strand" evidence="26">
    <location>
        <begin position="41"/>
        <end position="44"/>
    </location>
</feature>
<feature type="helix" evidence="26">
    <location>
        <begin position="46"/>
        <end position="52"/>
    </location>
</feature>
<feature type="helix" evidence="26">
    <location>
        <begin position="55"/>
        <end position="62"/>
    </location>
</feature>
<feature type="strand" evidence="26">
    <location>
        <begin position="69"/>
        <end position="71"/>
    </location>
</feature>
<feature type="helix" evidence="26">
    <location>
        <begin position="78"/>
        <end position="90"/>
    </location>
</feature>
<feature type="helix" evidence="26">
    <location>
        <begin position="97"/>
        <end position="99"/>
    </location>
</feature>
<feature type="helix" evidence="26">
    <location>
        <begin position="100"/>
        <end position="110"/>
    </location>
</feature>
<feature type="helix" evidence="26">
    <location>
        <begin position="113"/>
        <end position="119"/>
    </location>
</feature>